<dbReference type="EMBL" id="U25096">
    <property type="protein sequence ID" value="AAA86728.1"/>
    <property type="molecule type" value="mRNA"/>
</dbReference>
<dbReference type="EMBL" id="BC138737">
    <property type="protein sequence ID" value="AAI38738.1"/>
    <property type="molecule type" value="mRNA"/>
</dbReference>
<dbReference type="EMBL" id="BC138738">
    <property type="protein sequence ID" value="AAI38739.1"/>
    <property type="molecule type" value="mRNA"/>
</dbReference>
<dbReference type="CCDS" id="CCDS22412.1"/>
<dbReference type="RefSeq" id="NP_032478.2">
    <property type="nucleotide sequence ID" value="NM_008452.2"/>
</dbReference>
<dbReference type="SMR" id="Q60843"/>
<dbReference type="BioGRID" id="200964">
    <property type="interactions" value="2"/>
</dbReference>
<dbReference type="FunCoup" id="Q60843">
    <property type="interactions" value="792"/>
</dbReference>
<dbReference type="STRING" id="10090.ENSMUSP00000064823"/>
<dbReference type="iPTMnet" id="Q60843"/>
<dbReference type="PhosphoSitePlus" id="Q60843"/>
<dbReference type="jPOST" id="Q60843"/>
<dbReference type="PaxDb" id="10090-ENSMUSP00000064823"/>
<dbReference type="ProteomicsDB" id="263619"/>
<dbReference type="Antibodypedia" id="27348">
    <property type="antibodies" value="473 antibodies from 31 providers"/>
</dbReference>
<dbReference type="DNASU" id="16598"/>
<dbReference type="Ensembl" id="ENSMUST00000067912.8">
    <property type="protein sequence ID" value="ENSMUSP00000064823.8"/>
    <property type="gene ID" value="ENSMUSG00000055148.8"/>
</dbReference>
<dbReference type="GeneID" id="16598"/>
<dbReference type="KEGG" id="mmu:16598"/>
<dbReference type="UCSC" id="uc009mfq.2">
    <property type="organism name" value="mouse"/>
</dbReference>
<dbReference type="AGR" id="MGI:1342772"/>
<dbReference type="CTD" id="10365"/>
<dbReference type="MGI" id="MGI:1342772">
    <property type="gene designation" value="Klf2"/>
</dbReference>
<dbReference type="VEuPathDB" id="HostDB:ENSMUSG00000055148"/>
<dbReference type="eggNOG" id="KOG1721">
    <property type="taxonomic scope" value="Eukaryota"/>
</dbReference>
<dbReference type="GeneTree" id="ENSGT00940000163163"/>
<dbReference type="HOGENOM" id="CLU_002678_33_1_1"/>
<dbReference type="InParanoid" id="Q60843"/>
<dbReference type="OMA" id="DCHTQMM"/>
<dbReference type="OrthoDB" id="4748970at2759"/>
<dbReference type="TreeFam" id="TF350556"/>
<dbReference type="BioGRID-ORCS" id="16598">
    <property type="hits" value="2 hits in 79 CRISPR screens"/>
</dbReference>
<dbReference type="ChiTaRS" id="Klf2">
    <property type="organism name" value="mouse"/>
</dbReference>
<dbReference type="PRO" id="PR:Q60843"/>
<dbReference type="Proteomes" id="UP000000589">
    <property type="component" value="Chromosome 8"/>
</dbReference>
<dbReference type="RNAct" id="Q60843">
    <property type="molecule type" value="protein"/>
</dbReference>
<dbReference type="Bgee" id="ENSMUSG00000055148">
    <property type="expression patterns" value="Expressed in granulocyte and 214 other cell types or tissues"/>
</dbReference>
<dbReference type="GO" id="GO:0000785">
    <property type="term" value="C:chromatin"/>
    <property type="evidence" value="ECO:0007669"/>
    <property type="project" value="Ensembl"/>
</dbReference>
<dbReference type="GO" id="GO:0005634">
    <property type="term" value="C:nucleus"/>
    <property type="evidence" value="ECO:0000314"/>
    <property type="project" value="MGI"/>
</dbReference>
<dbReference type="GO" id="GO:0003677">
    <property type="term" value="F:DNA binding"/>
    <property type="evidence" value="ECO:0000250"/>
    <property type="project" value="MGI"/>
</dbReference>
<dbReference type="GO" id="GO:0003700">
    <property type="term" value="F:DNA-binding transcription factor activity"/>
    <property type="evidence" value="ECO:0000314"/>
    <property type="project" value="MGI"/>
</dbReference>
<dbReference type="GO" id="GO:0000981">
    <property type="term" value="F:DNA-binding transcription factor activity, RNA polymerase II-specific"/>
    <property type="evidence" value="ECO:0007669"/>
    <property type="project" value="Ensembl"/>
</dbReference>
<dbReference type="GO" id="GO:1990837">
    <property type="term" value="F:sequence-specific double-stranded DNA binding"/>
    <property type="evidence" value="ECO:0007669"/>
    <property type="project" value="Ensembl"/>
</dbReference>
<dbReference type="GO" id="GO:0008270">
    <property type="term" value="F:zinc ion binding"/>
    <property type="evidence" value="ECO:0007669"/>
    <property type="project" value="UniProtKB-KW"/>
</dbReference>
<dbReference type="GO" id="GO:0000902">
    <property type="term" value="P:cell morphogenesis"/>
    <property type="evidence" value="ECO:0000315"/>
    <property type="project" value="MGI"/>
</dbReference>
<dbReference type="GO" id="GO:0071409">
    <property type="term" value="P:cellular response to cycloheximide"/>
    <property type="evidence" value="ECO:0007669"/>
    <property type="project" value="Ensembl"/>
</dbReference>
<dbReference type="GO" id="GO:0070301">
    <property type="term" value="P:cellular response to hydrogen peroxide"/>
    <property type="evidence" value="ECO:0007669"/>
    <property type="project" value="Ensembl"/>
</dbReference>
<dbReference type="GO" id="GO:0071347">
    <property type="term" value="P:cellular response to interleukin-1"/>
    <property type="evidence" value="ECO:0007669"/>
    <property type="project" value="Ensembl"/>
</dbReference>
<dbReference type="GO" id="GO:0071499">
    <property type="term" value="P:cellular response to laminar fluid shear stress"/>
    <property type="evidence" value="ECO:0007669"/>
    <property type="project" value="Ensembl"/>
</dbReference>
<dbReference type="GO" id="GO:1901653">
    <property type="term" value="P:cellular response to peptide"/>
    <property type="evidence" value="ECO:0007669"/>
    <property type="project" value="Ensembl"/>
</dbReference>
<dbReference type="GO" id="GO:0071356">
    <property type="term" value="P:cellular response to tumor necrosis factor"/>
    <property type="evidence" value="ECO:0007669"/>
    <property type="project" value="Ensembl"/>
</dbReference>
<dbReference type="GO" id="GO:0097533">
    <property type="term" value="P:cellular stress response to acid chemical"/>
    <property type="evidence" value="ECO:0007669"/>
    <property type="project" value="Ensembl"/>
</dbReference>
<dbReference type="GO" id="GO:0040029">
    <property type="term" value="P:epigenetic regulation of gene expression"/>
    <property type="evidence" value="ECO:0000316"/>
    <property type="project" value="MGI"/>
</dbReference>
<dbReference type="GO" id="GO:0034101">
    <property type="term" value="P:erythrocyte homeostasis"/>
    <property type="evidence" value="ECO:0000315"/>
    <property type="project" value="MGI"/>
</dbReference>
<dbReference type="GO" id="GO:0043249">
    <property type="term" value="P:erythrocyte maturation"/>
    <property type="evidence" value="ECO:0000315"/>
    <property type="project" value="MGI"/>
</dbReference>
<dbReference type="GO" id="GO:0001701">
    <property type="term" value="P:in utero embryonic development"/>
    <property type="evidence" value="ECO:0000315"/>
    <property type="project" value="MGI"/>
</dbReference>
<dbReference type="GO" id="GO:0035264">
    <property type="term" value="P:multicellular organism growth"/>
    <property type="evidence" value="ECO:0000315"/>
    <property type="project" value="MGI"/>
</dbReference>
<dbReference type="GO" id="GO:0032715">
    <property type="term" value="P:negative regulation of interleukin-6 production"/>
    <property type="evidence" value="ECO:0007669"/>
    <property type="project" value="Ensembl"/>
</dbReference>
<dbReference type="GO" id="GO:1903671">
    <property type="term" value="P:negative regulation of sprouting angiogenesis"/>
    <property type="evidence" value="ECO:0007669"/>
    <property type="project" value="Ensembl"/>
</dbReference>
<dbReference type="GO" id="GO:0000122">
    <property type="term" value="P:negative regulation of transcription by RNA polymerase II"/>
    <property type="evidence" value="ECO:0007669"/>
    <property type="project" value="Ensembl"/>
</dbReference>
<dbReference type="GO" id="GO:0045893">
    <property type="term" value="P:positive regulation of DNA-templated transcription"/>
    <property type="evidence" value="ECO:0000314"/>
    <property type="project" value="MGI"/>
</dbReference>
<dbReference type="GO" id="GO:0045429">
    <property type="term" value="P:positive regulation of nitric oxide biosynthetic process"/>
    <property type="evidence" value="ECO:0007669"/>
    <property type="project" value="Ensembl"/>
</dbReference>
<dbReference type="GO" id="GO:0051247">
    <property type="term" value="P:positive regulation of protein metabolic process"/>
    <property type="evidence" value="ECO:0007669"/>
    <property type="project" value="Ensembl"/>
</dbReference>
<dbReference type="GO" id="GO:0048386">
    <property type="term" value="P:positive regulation of retinoic acid receptor signaling pathway"/>
    <property type="evidence" value="ECO:0007669"/>
    <property type="project" value="Ensembl"/>
</dbReference>
<dbReference type="GO" id="GO:0045944">
    <property type="term" value="P:positive regulation of transcription by RNA polymerase II"/>
    <property type="evidence" value="ECO:0000314"/>
    <property type="project" value="MGI"/>
</dbReference>
<dbReference type="GO" id="GO:0060509">
    <property type="term" value="P:type I pneumocyte differentiation"/>
    <property type="evidence" value="ECO:0000315"/>
    <property type="project" value="MGI"/>
</dbReference>
<dbReference type="GO" id="GO:0042311">
    <property type="term" value="P:vasodilation"/>
    <property type="evidence" value="ECO:0007669"/>
    <property type="project" value="Ensembl"/>
</dbReference>
<dbReference type="CDD" id="cd21583">
    <property type="entry name" value="KLF2_N"/>
    <property type="match status" value="1"/>
</dbReference>
<dbReference type="FunFam" id="3.30.160.60:FF:000018">
    <property type="entry name" value="Krueppel-like factor 15"/>
    <property type="match status" value="1"/>
</dbReference>
<dbReference type="FunFam" id="3.30.160.60:FF:000237">
    <property type="entry name" value="Krueppel-like factor 2"/>
    <property type="match status" value="1"/>
</dbReference>
<dbReference type="FunFam" id="3.30.160.60:FF:001156">
    <property type="entry name" value="Zinc finger protein 407"/>
    <property type="match status" value="1"/>
</dbReference>
<dbReference type="Gene3D" id="3.30.160.60">
    <property type="entry name" value="Classic Zinc Finger"/>
    <property type="match status" value="3"/>
</dbReference>
<dbReference type="InterPro" id="IPR036236">
    <property type="entry name" value="Znf_C2H2_sf"/>
</dbReference>
<dbReference type="InterPro" id="IPR013087">
    <property type="entry name" value="Znf_C2H2_type"/>
</dbReference>
<dbReference type="PANTHER" id="PTHR23235:SF109">
    <property type="entry name" value="KRUEPPEL-LIKE FACTOR 2"/>
    <property type="match status" value="1"/>
</dbReference>
<dbReference type="PANTHER" id="PTHR23235">
    <property type="entry name" value="KRUEPPEL-LIKE TRANSCRIPTION FACTOR"/>
    <property type="match status" value="1"/>
</dbReference>
<dbReference type="Pfam" id="PF00096">
    <property type="entry name" value="zf-C2H2"/>
    <property type="match status" value="3"/>
</dbReference>
<dbReference type="SMART" id="SM00355">
    <property type="entry name" value="ZnF_C2H2"/>
    <property type="match status" value="3"/>
</dbReference>
<dbReference type="SUPFAM" id="SSF57667">
    <property type="entry name" value="beta-beta-alpha zinc fingers"/>
    <property type="match status" value="2"/>
</dbReference>
<dbReference type="PROSITE" id="PS00028">
    <property type="entry name" value="ZINC_FINGER_C2H2_1"/>
    <property type="match status" value="3"/>
</dbReference>
<dbReference type="PROSITE" id="PS50157">
    <property type="entry name" value="ZINC_FINGER_C2H2_2"/>
    <property type="match status" value="3"/>
</dbReference>
<proteinExistence type="evidence at protein level"/>
<name>KLF2_MOUSE</name>
<feature type="chain" id="PRO_0000047163" description="Krueppel-like factor 2">
    <location>
        <begin position="1"/>
        <end position="354"/>
    </location>
</feature>
<feature type="zinc finger region" description="C2H2-type 1" evidence="3">
    <location>
        <begin position="271"/>
        <end position="295"/>
    </location>
</feature>
<feature type="zinc finger region" description="C2H2-type 2" evidence="3">
    <location>
        <begin position="301"/>
        <end position="325"/>
    </location>
</feature>
<feature type="zinc finger region" description="C2H2-type 3" evidence="3">
    <location>
        <begin position="331"/>
        <end position="353"/>
    </location>
</feature>
<feature type="region of interest" description="Disordered" evidence="4">
    <location>
        <begin position="52"/>
        <end position="111"/>
    </location>
</feature>
<feature type="region of interest" description="Interaction with WWP1">
    <location>
        <begin position="110"/>
        <end position="267"/>
    </location>
</feature>
<feature type="region of interest" description="Disordered" evidence="4">
    <location>
        <begin position="145"/>
        <end position="208"/>
    </location>
</feature>
<feature type="short sequence motif" description="9aaTAD" evidence="2">
    <location>
        <begin position="42"/>
        <end position="50"/>
    </location>
</feature>
<feature type="compositionally biased region" description="Pro residues" evidence="4">
    <location>
        <begin position="60"/>
        <end position="84"/>
    </location>
</feature>
<feature type="compositionally biased region" description="Pro residues" evidence="4">
    <location>
        <begin position="163"/>
        <end position="176"/>
    </location>
</feature>
<feature type="compositionally biased region" description="Low complexity" evidence="4">
    <location>
        <begin position="177"/>
        <end position="188"/>
    </location>
</feature>
<feature type="modified residue" description="Phosphothreonine" evidence="8">
    <location>
        <position position="171"/>
    </location>
</feature>
<feature type="modified residue" description="Phosphothreonine" evidence="8">
    <location>
        <position position="243"/>
    </location>
</feature>
<feature type="modified residue" description="Phosphoserine" evidence="8">
    <location>
        <position position="246"/>
    </location>
</feature>
<feature type="mutagenesis site" description="Greatly impairs polyubiquitination. Abolishes polyubiquitination; when associated with R-146." evidence="6">
    <original>K</original>
    <variation>R</variation>
    <location>
        <position position="121"/>
    </location>
</feature>
<feature type="mutagenesis site" description="Abolishes polyubiquitination; when associated with R-121." evidence="6">
    <original>K</original>
    <variation>R</variation>
    <location>
        <position position="146"/>
    </location>
</feature>
<feature type="sequence conflict" description="In Ref. 1; AAA86728." evidence="7" ref="1">
    <original>A</original>
    <variation>D</variation>
    <location>
        <position position="88"/>
    </location>
</feature>
<protein>
    <recommendedName>
        <fullName>Krueppel-like factor 2</fullName>
    </recommendedName>
    <alternativeName>
        <fullName>Lung krueppel-like factor</fullName>
    </alternativeName>
</protein>
<accession>Q60843</accession>
<accession>B2RS60</accession>
<sequence>MALSEPILPSFATFASPCERGLQERWPRNEPEAGGTDEDLNNVLDFILSMGLDGLGAENPPEPPPQPPPPAFYYPEPGAPPPYSIPAASLGTELLRPDLDPPQGPALHGRFLLAPPGRLVKAEPPEVDGGGYGCAPGLAHGPRGLKLEGAPGATGACMRGPAGRPPPPPDTPPLSPDGPLRIPASGPRNPFPPPFGPGPSFGGPGPALHYGPPAPGAFGLFEDAAAAAAALGLAPPATRGLLTPPSSPLELLEAKPKRGRRSWPRKRAATHTCSYTNCGKTYTKSSHLKAHLRTHTGEKPYHCNWEGCGWKFARSDELTRHYRKHTGHRPFQCHLCDRAFSRSDHLALHMKRHM</sequence>
<gene>
    <name type="primary">Klf2</name>
    <name type="synonym">Lklf</name>
</gene>
<reference key="1">
    <citation type="journal article" date="1995" name="Mol. Cell. Biol.">
        <title>Isolation of a gene encoding a functional zinc finger protein homologous to erythroid Kruppel-like factor: identification of a new multigene family.</title>
        <authorList>
            <person name="Anderson K.P."/>
            <person name="Kern C.B."/>
            <person name="Crable S.C."/>
            <person name="Lingrel J.B."/>
        </authorList>
    </citation>
    <scope>NUCLEOTIDE SEQUENCE [MRNA]</scope>
    <source>
        <strain>C57BL/6 X CBA</strain>
        <tissue>Lung</tissue>
    </source>
</reference>
<reference key="2">
    <citation type="journal article" date="2004" name="Genome Res.">
        <title>The status, quality, and expansion of the NIH full-length cDNA project: the Mammalian Gene Collection (MGC).</title>
        <authorList>
            <consortium name="The MGC Project Team"/>
        </authorList>
    </citation>
    <scope>NUCLEOTIDE SEQUENCE [LARGE SCALE MRNA]</scope>
    <source>
        <tissue>Brain</tissue>
    </source>
</reference>
<reference key="3">
    <citation type="journal article" date="2001" name="J. Biol. Chem.">
        <title>Lung Krueppel-like factor contains an autoinhibitory domain that regulates its transcriptional activation by binding WWP1, an E3 ubiquitin ligase.</title>
        <authorList>
            <person name="Conkright M.D."/>
            <person name="Wani M.A."/>
            <person name="Lingrel J.B."/>
        </authorList>
    </citation>
    <scope>INTERACTION WITH WWP1</scope>
</reference>
<reference key="4">
    <citation type="journal article" date="2004" name="Biochem. Biophys. Res. Commun.">
        <title>WWP1-dependent ubiquitination and degradation of the lung Kruppel-like factor, KLF2.</title>
        <authorList>
            <person name="Zhang X."/>
            <person name="Srinivasan S.V."/>
            <person name="Lingrel J.B."/>
        </authorList>
    </citation>
    <scope>INTERACTION WITH WWP1</scope>
    <scope>MUTAGENESIS OF LYS-121 AND LYS-146</scope>
    <scope>UBIQUITINATION</scope>
</reference>
<reference key="5">
    <citation type="journal article" date="2010" name="Cell">
        <title>A tissue-specific atlas of mouse protein phosphorylation and expression.</title>
        <authorList>
            <person name="Huttlin E.L."/>
            <person name="Jedrychowski M.P."/>
            <person name="Elias J.E."/>
            <person name="Goswami T."/>
            <person name="Rad R."/>
            <person name="Beausoleil S.A."/>
            <person name="Villen J."/>
            <person name="Haas W."/>
            <person name="Sowa M.E."/>
            <person name="Gygi S.P."/>
        </authorList>
    </citation>
    <scope>PHOSPHORYLATION [LARGE SCALE ANALYSIS] AT THR-171; THR-243 AND SER-246</scope>
    <scope>IDENTIFICATION BY MASS SPECTROMETRY [LARGE SCALE ANALYSIS]</scope>
    <source>
        <tissue>Brown adipose tissue</tissue>
        <tissue>Heart</tissue>
        <tissue>Kidney</tissue>
        <tissue>Spleen</tissue>
    </source>
</reference>
<evidence type="ECO:0000250" key="1"/>
<evidence type="ECO:0000250" key="2">
    <source>
        <dbReference type="UniProtKB" id="Q9Y5W3"/>
    </source>
</evidence>
<evidence type="ECO:0000255" key="3">
    <source>
        <dbReference type="PROSITE-ProRule" id="PRU00042"/>
    </source>
</evidence>
<evidence type="ECO:0000256" key="4">
    <source>
        <dbReference type="SAM" id="MobiDB-lite"/>
    </source>
</evidence>
<evidence type="ECO:0000269" key="5">
    <source>
    </source>
</evidence>
<evidence type="ECO:0000269" key="6">
    <source>
    </source>
</evidence>
<evidence type="ECO:0000305" key="7"/>
<evidence type="ECO:0007744" key="8">
    <source>
    </source>
</evidence>
<comment type="function">
    <text evidence="2">Transcription factor that binds to the CACCC box in the promoter of target genes such as HBB/beta globin or NOV and activates their transcription. Might be involved in transcriptional regulation by modulating the binding of the RARA nuclear receptor to RARE DNA elements (By similarity).</text>
</comment>
<comment type="subunit">
    <text evidence="5 6">Interacts with WWP1.</text>
</comment>
<comment type="subcellular location">
    <subcellularLocation>
        <location evidence="1">Nucleus</location>
    </subcellularLocation>
</comment>
<comment type="tissue specificity">
    <text>Predominant expression in the lungs and spleen.</text>
</comment>
<comment type="domain">
    <text evidence="2">The 9aaTAD motif is a transactivation domain present in a large number of yeast and animal transcription factors.</text>
</comment>
<comment type="PTM">
    <text evidence="6">Ubiquitinated. Polyubiquitination involves WWP1 and leads to proteasomal degradation of this protein.</text>
</comment>
<comment type="similarity">
    <text evidence="7">Belongs to the krueppel C2H2-type zinc-finger protein family.</text>
</comment>
<organism>
    <name type="scientific">Mus musculus</name>
    <name type="common">Mouse</name>
    <dbReference type="NCBI Taxonomy" id="10090"/>
    <lineage>
        <taxon>Eukaryota</taxon>
        <taxon>Metazoa</taxon>
        <taxon>Chordata</taxon>
        <taxon>Craniata</taxon>
        <taxon>Vertebrata</taxon>
        <taxon>Euteleostomi</taxon>
        <taxon>Mammalia</taxon>
        <taxon>Eutheria</taxon>
        <taxon>Euarchontoglires</taxon>
        <taxon>Glires</taxon>
        <taxon>Rodentia</taxon>
        <taxon>Myomorpha</taxon>
        <taxon>Muroidea</taxon>
        <taxon>Muridae</taxon>
        <taxon>Murinae</taxon>
        <taxon>Mus</taxon>
        <taxon>Mus</taxon>
    </lineage>
</organism>
<keyword id="KW-0010">Activator</keyword>
<keyword id="KW-0238">DNA-binding</keyword>
<keyword id="KW-0479">Metal-binding</keyword>
<keyword id="KW-0539">Nucleus</keyword>
<keyword id="KW-0597">Phosphoprotein</keyword>
<keyword id="KW-1185">Reference proteome</keyword>
<keyword id="KW-0677">Repeat</keyword>
<keyword id="KW-0804">Transcription</keyword>
<keyword id="KW-0805">Transcription regulation</keyword>
<keyword id="KW-0832">Ubl conjugation</keyword>
<keyword id="KW-0862">Zinc</keyword>
<keyword id="KW-0863">Zinc-finger</keyword>